<dbReference type="EC" id="5.6.1.7" evidence="1"/>
<dbReference type="EMBL" id="AM999887">
    <property type="protein sequence ID" value="CAQ54136.1"/>
    <property type="molecule type" value="Genomic_DNA"/>
</dbReference>
<dbReference type="RefSeq" id="WP_007302814.1">
    <property type="nucleotide sequence ID" value="NC_010981.1"/>
</dbReference>
<dbReference type="SMR" id="B3CL71"/>
<dbReference type="KEGG" id="wpi:WP0027"/>
<dbReference type="eggNOG" id="COG0459">
    <property type="taxonomic scope" value="Bacteria"/>
</dbReference>
<dbReference type="HOGENOM" id="CLU_016503_3_0_5"/>
<dbReference type="Proteomes" id="UP000008814">
    <property type="component" value="Chromosome"/>
</dbReference>
<dbReference type="GO" id="GO:0005737">
    <property type="term" value="C:cytoplasm"/>
    <property type="evidence" value="ECO:0007669"/>
    <property type="project" value="UniProtKB-SubCell"/>
</dbReference>
<dbReference type="GO" id="GO:0005524">
    <property type="term" value="F:ATP binding"/>
    <property type="evidence" value="ECO:0007669"/>
    <property type="project" value="UniProtKB-UniRule"/>
</dbReference>
<dbReference type="GO" id="GO:0140662">
    <property type="term" value="F:ATP-dependent protein folding chaperone"/>
    <property type="evidence" value="ECO:0007669"/>
    <property type="project" value="InterPro"/>
</dbReference>
<dbReference type="GO" id="GO:0016853">
    <property type="term" value="F:isomerase activity"/>
    <property type="evidence" value="ECO:0007669"/>
    <property type="project" value="UniProtKB-KW"/>
</dbReference>
<dbReference type="GO" id="GO:0051082">
    <property type="term" value="F:unfolded protein binding"/>
    <property type="evidence" value="ECO:0007669"/>
    <property type="project" value="UniProtKB-UniRule"/>
</dbReference>
<dbReference type="GO" id="GO:0042026">
    <property type="term" value="P:protein refolding"/>
    <property type="evidence" value="ECO:0007669"/>
    <property type="project" value="UniProtKB-UniRule"/>
</dbReference>
<dbReference type="CDD" id="cd03344">
    <property type="entry name" value="GroEL"/>
    <property type="match status" value="1"/>
</dbReference>
<dbReference type="FunFam" id="3.50.7.10:FF:000001">
    <property type="entry name" value="60 kDa chaperonin"/>
    <property type="match status" value="1"/>
</dbReference>
<dbReference type="Gene3D" id="3.50.7.10">
    <property type="entry name" value="GroEL"/>
    <property type="match status" value="1"/>
</dbReference>
<dbReference type="Gene3D" id="1.10.560.10">
    <property type="entry name" value="GroEL-like equatorial domain"/>
    <property type="match status" value="1"/>
</dbReference>
<dbReference type="Gene3D" id="3.30.260.10">
    <property type="entry name" value="TCP-1-like chaperonin intermediate domain"/>
    <property type="match status" value="1"/>
</dbReference>
<dbReference type="HAMAP" id="MF_00600">
    <property type="entry name" value="CH60"/>
    <property type="match status" value="1"/>
</dbReference>
<dbReference type="InterPro" id="IPR018370">
    <property type="entry name" value="Chaperonin_Cpn60_CS"/>
</dbReference>
<dbReference type="InterPro" id="IPR001844">
    <property type="entry name" value="Cpn60/GroEL"/>
</dbReference>
<dbReference type="InterPro" id="IPR002423">
    <property type="entry name" value="Cpn60/GroEL/TCP-1"/>
</dbReference>
<dbReference type="InterPro" id="IPR027409">
    <property type="entry name" value="GroEL-like_apical_dom_sf"/>
</dbReference>
<dbReference type="InterPro" id="IPR027413">
    <property type="entry name" value="GROEL-like_equatorial_sf"/>
</dbReference>
<dbReference type="InterPro" id="IPR027410">
    <property type="entry name" value="TCP-1-like_intermed_sf"/>
</dbReference>
<dbReference type="NCBIfam" id="TIGR02348">
    <property type="entry name" value="GroEL"/>
    <property type="match status" value="1"/>
</dbReference>
<dbReference type="NCBIfam" id="NF000592">
    <property type="entry name" value="PRK00013.1"/>
    <property type="match status" value="1"/>
</dbReference>
<dbReference type="NCBIfam" id="NF009487">
    <property type="entry name" value="PRK12849.1"/>
    <property type="match status" value="1"/>
</dbReference>
<dbReference type="NCBIfam" id="NF009488">
    <property type="entry name" value="PRK12850.1"/>
    <property type="match status" value="1"/>
</dbReference>
<dbReference type="NCBIfam" id="NF009489">
    <property type="entry name" value="PRK12851.1"/>
    <property type="match status" value="1"/>
</dbReference>
<dbReference type="PANTHER" id="PTHR45633">
    <property type="entry name" value="60 KDA HEAT SHOCK PROTEIN, MITOCHONDRIAL"/>
    <property type="match status" value="1"/>
</dbReference>
<dbReference type="Pfam" id="PF00118">
    <property type="entry name" value="Cpn60_TCP1"/>
    <property type="match status" value="1"/>
</dbReference>
<dbReference type="PRINTS" id="PR00298">
    <property type="entry name" value="CHAPERONIN60"/>
</dbReference>
<dbReference type="SUPFAM" id="SSF52029">
    <property type="entry name" value="GroEL apical domain-like"/>
    <property type="match status" value="1"/>
</dbReference>
<dbReference type="SUPFAM" id="SSF48592">
    <property type="entry name" value="GroEL equatorial domain-like"/>
    <property type="match status" value="1"/>
</dbReference>
<dbReference type="SUPFAM" id="SSF54849">
    <property type="entry name" value="GroEL-intermediate domain like"/>
    <property type="match status" value="1"/>
</dbReference>
<dbReference type="PROSITE" id="PS00296">
    <property type="entry name" value="CHAPERONINS_CPN60"/>
    <property type="match status" value="1"/>
</dbReference>
<proteinExistence type="inferred from homology"/>
<keyword id="KW-0067">ATP-binding</keyword>
<keyword id="KW-0143">Chaperone</keyword>
<keyword id="KW-0963">Cytoplasm</keyword>
<keyword id="KW-0413">Isomerase</keyword>
<keyword id="KW-0547">Nucleotide-binding</keyword>
<organism>
    <name type="scientific">Wolbachia pipientis subsp. Culex pipiens (strain wPip)</name>
    <dbReference type="NCBI Taxonomy" id="570417"/>
    <lineage>
        <taxon>Bacteria</taxon>
        <taxon>Pseudomonadati</taxon>
        <taxon>Pseudomonadota</taxon>
        <taxon>Alphaproteobacteria</taxon>
        <taxon>Rickettsiales</taxon>
        <taxon>Anaplasmataceae</taxon>
        <taxon>Wolbachieae</taxon>
        <taxon>Wolbachia</taxon>
    </lineage>
</organism>
<evidence type="ECO:0000255" key="1">
    <source>
        <dbReference type="HAMAP-Rule" id="MF_00600"/>
    </source>
</evidence>
<accession>B3CL71</accession>
<comment type="function">
    <text evidence="1">Together with its co-chaperonin GroES, plays an essential role in assisting protein folding. The GroEL-GroES system forms a nano-cage that allows encapsulation of the non-native substrate proteins and provides a physical environment optimized to promote and accelerate protein folding.</text>
</comment>
<comment type="catalytic activity">
    <reaction evidence="1">
        <text>ATP + H2O + a folded polypeptide = ADP + phosphate + an unfolded polypeptide.</text>
        <dbReference type="EC" id="5.6.1.7"/>
    </reaction>
</comment>
<comment type="subunit">
    <text evidence="1">Forms a cylinder of 14 subunits composed of two heptameric rings stacked back-to-back. Interacts with the co-chaperonin GroES.</text>
</comment>
<comment type="subcellular location">
    <subcellularLocation>
        <location evidence="1">Cytoplasm</location>
    </subcellularLocation>
</comment>
<comment type="similarity">
    <text evidence="1">Belongs to the chaperonin (HSP60) family.</text>
</comment>
<gene>
    <name evidence="1" type="primary">groEL</name>
    <name evidence="1" type="synonym">groL</name>
    <name type="ordered locus">WP0027</name>
</gene>
<sequence>MANIVVSGEQLQEAFREVAAMVDSTVGATAGPRGNTIGISKPYGGPEVTKDGYKVMKGIKPEKPLHSAIVSTIAQSASQCNDKVGDGTTTCSILTSNMIMEASKSIAAGNDRICIKNGIQKAKDVILKEITSMSRTISLEKMDEVAQVAIISANGDKDIGNSIADAVKKVGKEGVITVEESKGSKELEVELTTGMQFDRGYLSPYFVTNNEKMSVELDDPYLLITEKKLNIIQPLLPILEAIFKSGKPLFIIAEDVEGEALSTLVINKLRGLKVAAVKAPGFGDRRKEMLEDIAALTGAKYVIKDELGIKMEDLTLEDLGTAKNVKITKDNTTIVSEDSDCDKQNRVNARINQIKSQIETSTSDYDKEKLRERLAKLSGGVAVLKVGGATEVEVKERRDRVEDALHATRAAIEEGIVPGGGVALLYAASALDKLKASSDEEQIGINIVKKVLSAPIKRLVKNAGLESAVIIDYLIKQNDKELIYNVEAMNYANASTAGVIDPAKVVRIAFETAVSVASALITTESMIVDLPNKEENASSPMGAGAMGGMGGF</sequence>
<reference key="1">
    <citation type="journal article" date="2008" name="Mol. Biol. Evol.">
        <title>Genome evolution of Wolbachia strain wPip from the Culex pipiens group.</title>
        <authorList>
            <person name="Klasson L."/>
            <person name="Walker T."/>
            <person name="Sebaihia M."/>
            <person name="Sanders M.J."/>
            <person name="Quail M.A."/>
            <person name="Lord A."/>
            <person name="Sanders S."/>
            <person name="Earl J."/>
            <person name="O'Neill S.L."/>
            <person name="Thomson N."/>
            <person name="Sinkins S.P."/>
            <person name="Parkhill J."/>
        </authorList>
    </citation>
    <scope>NUCLEOTIDE SEQUENCE [LARGE SCALE GENOMIC DNA]</scope>
    <source>
        <strain>wPip</strain>
    </source>
</reference>
<protein>
    <recommendedName>
        <fullName evidence="1">Chaperonin GroEL</fullName>
        <ecNumber evidence="1">5.6.1.7</ecNumber>
    </recommendedName>
    <alternativeName>
        <fullName evidence="1">60 kDa chaperonin</fullName>
    </alternativeName>
    <alternativeName>
        <fullName evidence="1">Chaperonin-60</fullName>
        <shortName evidence="1">Cpn60</shortName>
    </alternativeName>
</protein>
<feature type="chain" id="PRO_1000130077" description="Chaperonin GroEL">
    <location>
        <begin position="1"/>
        <end position="552"/>
    </location>
</feature>
<feature type="binding site" evidence="1">
    <location>
        <begin position="29"/>
        <end position="32"/>
    </location>
    <ligand>
        <name>ATP</name>
        <dbReference type="ChEBI" id="CHEBI:30616"/>
    </ligand>
</feature>
<feature type="binding site" evidence="1">
    <location>
        <position position="50"/>
    </location>
    <ligand>
        <name>ATP</name>
        <dbReference type="ChEBI" id="CHEBI:30616"/>
    </ligand>
</feature>
<feature type="binding site" evidence="1">
    <location>
        <begin position="86"/>
        <end position="90"/>
    </location>
    <ligand>
        <name>ATP</name>
        <dbReference type="ChEBI" id="CHEBI:30616"/>
    </ligand>
</feature>
<feature type="binding site" evidence="1">
    <location>
        <position position="420"/>
    </location>
    <ligand>
        <name>ATP</name>
        <dbReference type="ChEBI" id="CHEBI:30616"/>
    </ligand>
</feature>
<feature type="binding site" evidence="1">
    <location>
        <position position="501"/>
    </location>
    <ligand>
        <name>ATP</name>
        <dbReference type="ChEBI" id="CHEBI:30616"/>
    </ligand>
</feature>
<name>CH60_WOLPP</name>